<feature type="chain" id="PRO_0000243763" description="Metallothiol transferase FosB">
    <location>
        <begin position="1"/>
        <end position="139"/>
    </location>
</feature>
<feature type="domain" description="VOC" evidence="2">
    <location>
        <begin position="4"/>
        <end position="119"/>
    </location>
</feature>
<feature type="active site" description="Proton donor/acceptor" evidence="2">
    <location>
        <position position="115"/>
    </location>
</feature>
<feature type="binding site" evidence="1">
    <location>
        <position position="7"/>
    </location>
    <ligand>
        <name>Mg(2+)</name>
        <dbReference type="ChEBI" id="CHEBI:18420"/>
    </ligand>
</feature>
<feature type="binding site" evidence="1">
    <location>
        <position position="66"/>
    </location>
    <ligand>
        <name>Mg(2+)</name>
        <dbReference type="ChEBI" id="CHEBI:18420"/>
    </ligand>
</feature>
<feature type="binding site" evidence="1">
    <location>
        <position position="115"/>
    </location>
    <ligand>
        <name>Mg(2+)</name>
        <dbReference type="ChEBI" id="CHEBI:18420"/>
    </ligand>
</feature>
<comment type="function">
    <text evidence="1">Metallothiol transferase which confers resistance to fosfomycin by catalyzing the addition of a thiol cofactor to fosfomycin. L-cysteine is probably the physiological thiol donor.</text>
</comment>
<comment type="cofactor">
    <cofactor evidence="1">
        <name>Mg(2+)</name>
        <dbReference type="ChEBI" id="CHEBI:18420"/>
    </cofactor>
</comment>
<comment type="subunit">
    <text evidence="1">Homodimer.</text>
</comment>
<comment type="subcellular location">
    <subcellularLocation>
        <location evidence="1">Cytoplasm</location>
    </subcellularLocation>
</comment>
<comment type="similarity">
    <text evidence="1">Belongs to the fosfomycin resistance protein family. FosB subfamily.</text>
</comment>
<reference key="1">
    <citation type="journal article" date="2006" name="Lancet">
        <title>Complete genome sequence of USA300, an epidemic clone of community-acquired meticillin-resistant Staphylococcus aureus.</title>
        <authorList>
            <person name="Diep B.A."/>
            <person name="Gill S.R."/>
            <person name="Chang R.F."/>
            <person name="Phan T.H."/>
            <person name="Chen J.H."/>
            <person name="Davidson M.G."/>
            <person name="Lin F."/>
            <person name="Lin J."/>
            <person name="Carleton H.A."/>
            <person name="Mongodin E.F."/>
            <person name="Sensabaugh G.F."/>
            <person name="Perdreau-Remington F."/>
        </authorList>
    </citation>
    <scope>NUCLEOTIDE SEQUENCE [LARGE SCALE GENOMIC DNA]</scope>
    <source>
        <strain>USA300</strain>
    </source>
</reference>
<evidence type="ECO:0000255" key="1">
    <source>
        <dbReference type="HAMAP-Rule" id="MF_01512"/>
    </source>
</evidence>
<evidence type="ECO:0000255" key="2">
    <source>
        <dbReference type="PROSITE-ProRule" id="PRU01163"/>
    </source>
</evidence>
<proteinExistence type="inferred from homology"/>
<protein>
    <recommendedName>
        <fullName evidence="1">Metallothiol transferase FosB</fullName>
        <ecNumber evidence="1">2.5.1.-</ecNumber>
    </recommendedName>
    <alternativeName>
        <fullName evidence="1">Fosfomycin resistance protein</fullName>
    </alternativeName>
</protein>
<gene>
    <name evidence="1" type="primary">fosB</name>
    <name type="ordered locus">SAUSA300_2280</name>
</gene>
<keyword id="KW-0046">Antibiotic resistance</keyword>
<keyword id="KW-0963">Cytoplasm</keyword>
<keyword id="KW-0460">Magnesium</keyword>
<keyword id="KW-0479">Metal-binding</keyword>
<keyword id="KW-0808">Transferase</keyword>
<sequence length="139" mass="16648">MLKSINHICFSVRNLNDSIHFYRDILLGKLLLTGKKTAYFELAGLWIALNEEKDIPRNEIHFSYTHIAFTIDDSEFKYWHQRLKDNNVNILEGRVRDIRDRQSIYFTDPDGHKLELHTGTLENRLNYYKEAKPHMTFYK</sequence>
<organism>
    <name type="scientific">Staphylococcus aureus (strain USA300)</name>
    <dbReference type="NCBI Taxonomy" id="367830"/>
    <lineage>
        <taxon>Bacteria</taxon>
        <taxon>Bacillati</taxon>
        <taxon>Bacillota</taxon>
        <taxon>Bacilli</taxon>
        <taxon>Bacillales</taxon>
        <taxon>Staphylococcaceae</taxon>
        <taxon>Staphylococcus</taxon>
    </lineage>
</organism>
<name>FOSB_STAA3</name>
<dbReference type="EC" id="2.5.1.-" evidence="1"/>
<dbReference type="EMBL" id="CP000255">
    <property type="protein sequence ID" value="ABD21490.1"/>
    <property type="molecule type" value="Genomic_DNA"/>
</dbReference>
<dbReference type="RefSeq" id="WP_000920239.1">
    <property type="nucleotide sequence ID" value="NZ_CP027476.1"/>
</dbReference>
<dbReference type="SMR" id="Q2FEG3"/>
<dbReference type="KEGG" id="saa:SAUSA300_2280"/>
<dbReference type="HOGENOM" id="CLU_121356_0_0_9"/>
<dbReference type="OMA" id="RDEKPHM"/>
<dbReference type="Proteomes" id="UP000001939">
    <property type="component" value="Chromosome"/>
</dbReference>
<dbReference type="GO" id="GO:0005737">
    <property type="term" value="C:cytoplasm"/>
    <property type="evidence" value="ECO:0007669"/>
    <property type="project" value="UniProtKB-SubCell"/>
</dbReference>
<dbReference type="GO" id="GO:0000287">
    <property type="term" value="F:magnesium ion binding"/>
    <property type="evidence" value="ECO:0007669"/>
    <property type="project" value="UniProtKB-UniRule"/>
</dbReference>
<dbReference type="GO" id="GO:0016765">
    <property type="term" value="F:transferase activity, transferring alkyl or aryl (other than methyl) groups"/>
    <property type="evidence" value="ECO:0007669"/>
    <property type="project" value="UniProtKB-UniRule"/>
</dbReference>
<dbReference type="GO" id="GO:0046677">
    <property type="term" value="P:response to antibiotic"/>
    <property type="evidence" value="ECO:0007669"/>
    <property type="project" value="UniProtKB-UniRule"/>
</dbReference>
<dbReference type="Gene3D" id="3.10.180.10">
    <property type="entry name" value="2,3-Dihydroxybiphenyl 1,2-Dioxygenase, domain 1"/>
    <property type="match status" value="1"/>
</dbReference>
<dbReference type="HAMAP" id="MF_01512">
    <property type="entry name" value="FosB"/>
    <property type="match status" value="1"/>
</dbReference>
<dbReference type="InterPro" id="IPR051332">
    <property type="entry name" value="Fosfomycin_Res_Enzymes"/>
</dbReference>
<dbReference type="InterPro" id="IPR029068">
    <property type="entry name" value="Glyas_Bleomycin-R_OHBP_Dase"/>
</dbReference>
<dbReference type="InterPro" id="IPR004360">
    <property type="entry name" value="Glyas_Fos-R_dOase_dom"/>
</dbReference>
<dbReference type="InterPro" id="IPR022858">
    <property type="entry name" value="Metallothiol_Trafse_FosB"/>
</dbReference>
<dbReference type="InterPro" id="IPR037523">
    <property type="entry name" value="VOC"/>
</dbReference>
<dbReference type="NCBIfam" id="NF000493">
    <property type="entry name" value="Fos_BSH"/>
    <property type="match status" value="1"/>
</dbReference>
<dbReference type="NCBIfam" id="NF003152">
    <property type="entry name" value="PRK04101.1"/>
    <property type="match status" value="1"/>
</dbReference>
<dbReference type="PANTHER" id="PTHR36113:SF6">
    <property type="entry name" value="FOSFOMYCIN RESISTANCE PROTEIN FOSX"/>
    <property type="match status" value="1"/>
</dbReference>
<dbReference type="PANTHER" id="PTHR36113">
    <property type="entry name" value="LYASE, PUTATIVE-RELATED-RELATED"/>
    <property type="match status" value="1"/>
</dbReference>
<dbReference type="Pfam" id="PF00903">
    <property type="entry name" value="Glyoxalase"/>
    <property type="match status" value="1"/>
</dbReference>
<dbReference type="SUPFAM" id="SSF54593">
    <property type="entry name" value="Glyoxalase/Bleomycin resistance protein/Dihydroxybiphenyl dioxygenase"/>
    <property type="match status" value="1"/>
</dbReference>
<dbReference type="PROSITE" id="PS51819">
    <property type="entry name" value="VOC"/>
    <property type="match status" value="1"/>
</dbReference>
<accession>Q2FEG3</accession>